<keyword id="KW-0687">Ribonucleoprotein</keyword>
<keyword id="KW-0689">Ribosomal protein</keyword>
<keyword id="KW-0694">RNA-binding</keyword>
<keyword id="KW-0699">rRNA-binding</keyword>
<feature type="chain" id="PRO_1000052651" description="Large ribosomal subunit protein uL22">
    <location>
        <begin position="1"/>
        <end position="110"/>
    </location>
</feature>
<sequence length="110" mass="12071">MEVLAKHRFARTSAQKARLVADQIRGLPVAKALEILTFSPKKAAVLVKKVLDSAIANAEHNEGADIDELKVGAVFVDEGPTMKRIMPRAKGRADRIMKRTSHITVVVSDR</sequence>
<protein>
    <recommendedName>
        <fullName evidence="1">Large ribosomal subunit protein uL22</fullName>
    </recommendedName>
    <alternativeName>
        <fullName evidence="2">50S ribosomal protein L22</fullName>
    </alternativeName>
</protein>
<comment type="function">
    <text evidence="1">This protein binds specifically to 23S rRNA; its binding is stimulated by other ribosomal proteins, e.g. L4, L17, and L20. It is important during the early stages of 50S assembly. It makes multiple contacts with different domains of the 23S rRNA in the assembled 50S subunit and ribosome (By similarity).</text>
</comment>
<comment type="function">
    <text evidence="1">The globular domain of the protein is located near the polypeptide exit tunnel on the outside of the subunit, while an extended beta-hairpin is found that lines the wall of the exit tunnel in the center of the 70S ribosome.</text>
</comment>
<comment type="subunit">
    <text evidence="1">Part of the 50S ribosomal subunit.</text>
</comment>
<comment type="similarity">
    <text evidence="1">Belongs to the universal ribosomal protein uL22 family.</text>
</comment>
<organism>
    <name type="scientific">Shewanella sp. (strain MR-7)</name>
    <dbReference type="NCBI Taxonomy" id="60481"/>
    <lineage>
        <taxon>Bacteria</taxon>
        <taxon>Pseudomonadati</taxon>
        <taxon>Pseudomonadota</taxon>
        <taxon>Gammaproteobacteria</taxon>
        <taxon>Alteromonadales</taxon>
        <taxon>Shewanellaceae</taxon>
        <taxon>Shewanella</taxon>
    </lineage>
</organism>
<gene>
    <name evidence="1" type="primary">rplV</name>
    <name type="ordered locus">Shewmr7_0199</name>
</gene>
<evidence type="ECO:0000255" key="1">
    <source>
        <dbReference type="HAMAP-Rule" id="MF_01331"/>
    </source>
</evidence>
<evidence type="ECO:0000305" key="2"/>
<name>RL22_SHESR</name>
<dbReference type="EMBL" id="CP000444">
    <property type="protein sequence ID" value="ABI41205.1"/>
    <property type="molecule type" value="Genomic_DNA"/>
</dbReference>
<dbReference type="SMR" id="Q0I0A0"/>
<dbReference type="KEGG" id="shm:Shewmr7_0199"/>
<dbReference type="HOGENOM" id="CLU_083987_3_3_6"/>
<dbReference type="GO" id="GO:0022625">
    <property type="term" value="C:cytosolic large ribosomal subunit"/>
    <property type="evidence" value="ECO:0007669"/>
    <property type="project" value="TreeGrafter"/>
</dbReference>
<dbReference type="GO" id="GO:0019843">
    <property type="term" value="F:rRNA binding"/>
    <property type="evidence" value="ECO:0007669"/>
    <property type="project" value="UniProtKB-UniRule"/>
</dbReference>
<dbReference type="GO" id="GO:0003735">
    <property type="term" value="F:structural constituent of ribosome"/>
    <property type="evidence" value="ECO:0007669"/>
    <property type="project" value="InterPro"/>
</dbReference>
<dbReference type="GO" id="GO:0006412">
    <property type="term" value="P:translation"/>
    <property type="evidence" value="ECO:0007669"/>
    <property type="project" value="UniProtKB-UniRule"/>
</dbReference>
<dbReference type="CDD" id="cd00336">
    <property type="entry name" value="Ribosomal_L22"/>
    <property type="match status" value="1"/>
</dbReference>
<dbReference type="FunFam" id="3.90.470.10:FF:000001">
    <property type="entry name" value="50S ribosomal protein L22"/>
    <property type="match status" value="1"/>
</dbReference>
<dbReference type="Gene3D" id="3.90.470.10">
    <property type="entry name" value="Ribosomal protein L22/L17"/>
    <property type="match status" value="1"/>
</dbReference>
<dbReference type="HAMAP" id="MF_01331_B">
    <property type="entry name" value="Ribosomal_uL22_B"/>
    <property type="match status" value="1"/>
</dbReference>
<dbReference type="InterPro" id="IPR001063">
    <property type="entry name" value="Ribosomal_uL22"/>
</dbReference>
<dbReference type="InterPro" id="IPR005727">
    <property type="entry name" value="Ribosomal_uL22_bac/chlpt-type"/>
</dbReference>
<dbReference type="InterPro" id="IPR047867">
    <property type="entry name" value="Ribosomal_uL22_bac/org-type"/>
</dbReference>
<dbReference type="InterPro" id="IPR018260">
    <property type="entry name" value="Ribosomal_uL22_CS"/>
</dbReference>
<dbReference type="InterPro" id="IPR036394">
    <property type="entry name" value="Ribosomal_uL22_sf"/>
</dbReference>
<dbReference type="NCBIfam" id="TIGR01044">
    <property type="entry name" value="rplV_bact"/>
    <property type="match status" value="1"/>
</dbReference>
<dbReference type="PANTHER" id="PTHR13501">
    <property type="entry name" value="CHLOROPLAST 50S RIBOSOMAL PROTEIN L22-RELATED"/>
    <property type="match status" value="1"/>
</dbReference>
<dbReference type="PANTHER" id="PTHR13501:SF8">
    <property type="entry name" value="LARGE RIBOSOMAL SUBUNIT PROTEIN UL22M"/>
    <property type="match status" value="1"/>
</dbReference>
<dbReference type="Pfam" id="PF00237">
    <property type="entry name" value="Ribosomal_L22"/>
    <property type="match status" value="1"/>
</dbReference>
<dbReference type="SUPFAM" id="SSF54843">
    <property type="entry name" value="Ribosomal protein L22"/>
    <property type="match status" value="1"/>
</dbReference>
<dbReference type="PROSITE" id="PS00464">
    <property type="entry name" value="RIBOSOMAL_L22"/>
    <property type="match status" value="1"/>
</dbReference>
<reference key="1">
    <citation type="submission" date="2006-08" db="EMBL/GenBank/DDBJ databases">
        <title>Complete sequence of chromosome 1 of Shewanella sp. MR-7.</title>
        <authorList>
            <person name="Copeland A."/>
            <person name="Lucas S."/>
            <person name="Lapidus A."/>
            <person name="Barry K."/>
            <person name="Detter J.C."/>
            <person name="Glavina del Rio T."/>
            <person name="Hammon N."/>
            <person name="Israni S."/>
            <person name="Dalin E."/>
            <person name="Tice H."/>
            <person name="Pitluck S."/>
            <person name="Kiss H."/>
            <person name="Brettin T."/>
            <person name="Bruce D."/>
            <person name="Han C."/>
            <person name="Tapia R."/>
            <person name="Gilna P."/>
            <person name="Schmutz J."/>
            <person name="Larimer F."/>
            <person name="Land M."/>
            <person name="Hauser L."/>
            <person name="Kyrpides N."/>
            <person name="Mikhailova N."/>
            <person name="Nealson K."/>
            <person name="Konstantinidis K."/>
            <person name="Klappenbach J."/>
            <person name="Tiedje J."/>
            <person name="Richardson P."/>
        </authorList>
    </citation>
    <scope>NUCLEOTIDE SEQUENCE [LARGE SCALE GENOMIC DNA]</scope>
    <source>
        <strain>MR-7</strain>
    </source>
</reference>
<proteinExistence type="inferred from homology"/>
<accession>Q0I0A0</accession>